<proteinExistence type="evidence at protein level"/>
<accession>Q9KJT3</accession>
<keyword id="KW-0002">3D-structure</keyword>
<keyword id="KW-0046">Antibiotic resistance</keyword>
<keyword id="KW-0067">ATP-binding</keyword>
<keyword id="KW-0961">Cell wall biogenesis/degradation</keyword>
<keyword id="KW-0418">Kinase</keyword>
<keyword id="KW-0472">Membrane</keyword>
<keyword id="KW-0479">Metal-binding</keyword>
<keyword id="KW-0547">Nucleotide-binding</keyword>
<keyword id="KW-0597">Phosphoprotein</keyword>
<keyword id="KW-0808">Transferase</keyword>
<keyword id="KW-0812">Transmembrane</keyword>
<keyword id="KW-1133">Transmembrane helix</keyword>
<keyword id="KW-0902">Two-component regulatory system</keyword>
<evidence type="ECO:0000250" key="1">
    <source>
        <dbReference type="UniProtKB" id="Q06240"/>
    </source>
</evidence>
<evidence type="ECO:0000255" key="2"/>
<evidence type="ECO:0000255" key="3">
    <source>
        <dbReference type="PROSITE-ProRule" id="PRU00107"/>
    </source>
</evidence>
<evidence type="ECO:0000269" key="4">
    <source>
    </source>
</evidence>
<evidence type="ECO:0000303" key="5">
    <source>
    </source>
</evidence>
<evidence type="ECO:0000305" key="6"/>
<evidence type="ECO:0000312" key="7">
    <source>
        <dbReference type="EMBL" id="AAF86642.1"/>
    </source>
</evidence>
<evidence type="ECO:0007744" key="8">
    <source>
        <dbReference type="PDB" id="8DX0"/>
    </source>
</evidence>
<reference evidence="7" key="1">
    <citation type="journal article" date="2000" name="Antimicrob. Agents Chemother.">
        <title>vanC cluster of vancomycin-resistant Enterococcus gallinarum BM4174.</title>
        <authorList>
            <person name="Arias C.A."/>
            <person name="Courvalin P."/>
            <person name="Reynolds P.E."/>
        </authorList>
    </citation>
    <scope>NUCLEOTIDE SEQUENCE [GENOMIC DNA]</scope>
    <source>
        <strain evidence="7">BM4174</strain>
    </source>
</reference>
<reference evidence="6" key="2">
    <citation type="journal article" date="2005" name="Antimicrob. Agents Chemother.">
        <title>Transcriptional analysis of the vanC cluster from Enterococcus gallinarum strains with constitutive and inducible vancomycin resistance.</title>
        <authorList>
            <person name="Panesso D."/>
            <person name="Abadia-Patino L."/>
            <person name="Vanegas N."/>
            <person name="Reynolds P.E."/>
            <person name="Courvalin P."/>
            <person name="Arias C.A."/>
        </authorList>
    </citation>
    <scope>INDUCTION</scope>
</reference>
<reference evidence="8" key="3">
    <citation type="journal article" date="2023" name="J. Biol. Chem.">
        <title>Structure of VanS from vancomycin-resistant enterococci: A sensor kinase with weak ATP binding.</title>
        <authorList>
            <person name="Grasty K.C."/>
            <person name="Guzik C."/>
            <person name="D'Lauro E.J."/>
            <person name="Padrick S.B."/>
            <person name="Beld J."/>
            <person name="Loll P.J."/>
        </authorList>
    </citation>
    <scope>X-RAY CRYSTALLOGRAPHY (1.45 ANGSTROMS) OF 208-361 IN COMPLEX WITH MG(2+)</scope>
</reference>
<organism evidence="7">
    <name type="scientific">Enterococcus gallinarum</name>
    <dbReference type="NCBI Taxonomy" id="1353"/>
    <lineage>
        <taxon>Bacteria</taxon>
        <taxon>Bacillati</taxon>
        <taxon>Bacillota</taxon>
        <taxon>Bacilli</taxon>
        <taxon>Lactobacillales</taxon>
        <taxon>Enterococcaceae</taxon>
        <taxon>Enterococcus</taxon>
    </lineage>
</organism>
<protein>
    <recommendedName>
        <fullName evidence="6">Sensor protein VanSC</fullName>
        <shortName evidence="6">VanS</shortName>
        <shortName evidence="5">VanSC</shortName>
        <ecNumber evidence="1">2.7.13.3</ecNumber>
    </recommendedName>
    <alternativeName>
        <fullName evidence="6">Vancomycin histidine protein kinase</fullName>
    </alternativeName>
    <alternativeName>
        <fullName evidence="6">Vancomycin resistance protein VanSC</fullName>
    </alternativeName>
</protein>
<feature type="chain" id="PRO_0000461962" description="Sensor protein VanSC">
    <location>
        <begin position="1"/>
        <end position="361"/>
    </location>
</feature>
<feature type="transmembrane region" description="Helical" evidence="2">
    <location>
        <begin position="16"/>
        <end position="36"/>
    </location>
</feature>
<feature type="transmembrane region" description="Helical" evidence="2">
    <location>
        <begin position="59"/>
        <end position="79"/>
    </location>
</feature>
<feature type="domain" description="Histidine kinase" evidence="3">
    <location>
        <begin position="144"/>
        <end position="359"/>
    </location>
</feature>
<feature type="binding site" evidence="8">
    <location>
        <position position="252"/>
    </location>
    <ligand>
        <name>Mg(2+)</name>
        <dbReference type="ChEBI" id="CHEBI:18420"/>
    </ligand>
</feature>
<feature type="modified residue" description="Phosphohistidine; by autocatalysis" evidence="3">
    <location>
        <position position="147"/>
    </location>
</feature>
<comment type="catalytic activity">
    <reaction evidence="1">
        <text>ATP + protein L-histidine = ADP + protein N-phospho-L-histidine.</text>
        <dbReference type="EC" id="2.7.13.3"/>
    </reaction>
</comment>
<comment type="subcellular location">
    <subcellularLocation>
        <location evidence="2">Membrane</location>
        <topology evidence="2">Multi-pass membrane protein</topology>
    </subcellularLocation>
</comment>
<comment type="induction">
    <text evidence="4">Expression regulated by upstream promoter elements (PubMed:15728903). Part of the probable VanC-type operon associated with vancomycin resistance (PubMed:15728903).</text>
</comment>
<comment type="PTM">
    <text evidence="1">Autophosphorylated.</text>
</comment>
<name>VANSC_ENTGA</name>
<sequence length="361" mass="41506">MKNRNPLIRKLLTQYFVTTGILLAFLVMIPLVIRFIAGTRTWYGTEPIYYILRFFADRWLFCVAIGALLIWFGTTIYYMTKAIGYLNETIQATTQLIEEPSKRITLSSHLIDVQEEMNQLREKSLQDQRAAKEAEQRKNDLIVYLAHDLRTPLTSVIGYLTLLKEEPQLSNAMRNRYTEIALQKAQRLELLISEFFEITRFNLTTIVLQTETTDLSLMLEQLTFEFLPLLEEKNLNWQLNLQKNVLATVDTEKIARVFDNLIRNAINYSYPDSPLLLELVESDSIHIRLTNRGKTIPEEMIGRLFEPFYRMDSSRATATSGTGLGLPIAKEILLASGGDISAESKDETIIFNVRLPKPANN</sequence>
<dbReference type="EC" id="2.7.13.3" evidence="1"/>
<dbReference type="EMBL" id="AF162694">
    <property type="protein sequence ID" value="AAF86642.1"/>
    <property type="molecule type" value="Genomic_DNA"/>
</dbReference>
<dbReference type="RefSeq" id="WP_063856733.1">
    <property type="nucleotide sequence ID" value="NG_048430.1"/>
</dbReference>
<dbReference type="PDB" id="8DX0">
    <property type="method" value="X-ray"/>
    <property type="resolution" value="1.45 A"/>
    <property type="chains" value="A/B=208-361"/>
</dbReference>
<dbReference type="PDBsum" id="8DX0"/>
<dbReference type="SMR" id="Q9KJT3"/>
<dbReference type="CARD" id="ARO:3002933">
    <property type="molecule name" value="vanS_in_vanC_cl"/>
    <property type="mechanism identifier" value="ARO:0001001"/>
    <property type="mechanism name" value="antibiotic target alteration"/>
</dbReference>
<dbReference type="GO" id="GO:0005886">
    <property type="term" value="C:plasma membrane"/>
    <property type="evidence" value="ECO:0007669"/>
    <property type="project" value="TreeGrafter"/>
</dbReference>
<dbReference type="GO" id="GO:0046872">
    <property type="term" value="F:metal ion binding"/>
    <property type="evidence" value="ECO:0007669"/>
    <property type="project" value="UniProtKB-KW"/>
</dbReference>
<dbReference type="GO" id="GO:0004721">
    <property type="term" value="F:phosphoprotein phosphatase activity"/>
    <property type="evidence" value="ECO:0007669"/>
    <property type="project" value="TreeGrafter"/>
</dbReference>
<dbReference type="GO" id="GO:0000155">
    <property type="term" value="F:phosphorelay sensor kinase activity"/>
    <property type="evidence" value="ECO:0007669"/>
    <property type="project" value="InterPro"/>
</dbReference>
<dbReference type="GO" id="GO:0016036">
    <property type="term" value="P:cellular response to phosphate starvation"/>
    <property type="evidence" value="ECO:0007669"/>
    <property type="project" value="TreeGrafter"/>
</dbReference>
<dbReference type="CDD" id="cd00082">
    <property type="entry name" value="HisKA"/>
    <property type="match status" value="1"/>
</dbReference>
<dbReference type="Gene3D" id="1.10.287.130">
    <property type="match status" value="1"/>
</dbReference>
<dbReference type="Gene3D" id="3.30.565.10">
    <property type="entry name" value="Histidine kinase-like ATPase, C-terminal domain"/>
    <property type="match status" value="1"/>
</dbReference>
<dbReference type="InterPro" id="IPR050351">
    <property type="entry name" value="2-comp_sensor_kinase"/>
</dbReference>
<dbReference type="InterPro" id="IPR036890">
    <property type="entry name" value="HATPase_C_sf"/>
</dbReference>
<dbReference type="InterPro" id="IPR005467">
    <property type="entry name" value="His_kinase_dom"/>
</dbReference>
<dbReference type="InterPro" id="IPR003661">
    <property type="entry name" value="HisK_dim/P_dom"/>
</dbReference>
<dbReference type="InterPro" id="IPR036097">
    <property type="entry name" value="HisK_dim/P_sf"/>
</dbReference>
<dbReference type="InterPro" id="IPR004358">
    <property type="entry name" value="Sig_transdc_His_kin-like_C"/>
</dbReference>
<dbReference type="NCBIfam" id="NF033091">
    <property type="entry name" value="HK_VanS_ACDEFG"/>
    <property type="match status" value="1"/>
</dbReference>
<dbReference type="PANTHER" id="PTHR45453">
    <property type="entry name" value="PHOSPHATE REGULON SENSOR PROTEIN PHOR"/>
    <property type="match status" value="1"/>
</dbReference>
<dbReference type="PANTHER" id="PTHR45453:SF1">
    <property type="entry name" value="PHOSPHATE REGULON SENSOR PROTEIN PHOR"/>
    <property type="match status" value="1"/>
</dbReference>
<dbReference type="Pfam" id="PF02518">
    <property type="entry name" value="HATPase_c"/>
    <property type="match status" value="1"/>
</dbReference>
<dbReference type="Pfam" id="PF00512">
    <property type="entry name" value="HisKA"/>
    <property type="match status" value="1"/>
</dbReference>
<dbReference type="PRINTS" id="PR00344">
    <property type="entry name" value="BCTRLSENSOR"/>
</dbReference>
<dbReference type="SMART" id="SM00387">
    <property type="entry name" value="HATPase_c"/>
    <property type="match status" value="1"/>
</dbReference>
<dbReference type="SMART" id="SM00388">
    <property type="entry name" value="HisKA"/>
    <property type="match status" value="1"/>
</dbReference>
<dbReference type="SUPFAM" id="SSF55874">
    <property type="entry name" value="ATPase domain of HSP90 chaperone/DNA topoisomerase II/histidine kinase"/>
    <property type="match status" value="1"/>
</dbReference>
<dbReference type="SUPFAM" id="SSF47384">
    <property type="entry name" value="Homodimeric domain of signal transducing histidine kinase"/>
    <property type="match status" value="1"/>
</dbReference>
<dbReference type="PROSITE" id="PS50109">
    <property type="entry name" value="HIS_KIN"/>
    <property type="match status" value="1"/>
</dbReference>
<gene>
    <name evidence="7" type="primary">vanSc</name>
</gene>